<name>ENTS_ECOL6</name>
<dbReference type="EMBL" id="AE014075">
    <property type="protein sequence ID" value="AAN79153.1"/>
    <property type="molecule type" value="Genomic_DNA"/>
</dbReference>
<dbReference type="RefSeq" id="WP_001041793.1">
    <property type="nucleotide sequence ID" value="NZ_CP051263.1"/>
</dbReference>
<dbReference type="SMR" id="Q8FK20"/>
<dbReference type="STRING" id="199310.c0678"/>
<dbReference type="KEGG" id="ecc:c0678"/>
<dbReference type="eggNOG" id="COG0477">
    <property type="taxonomic scope" value="Bacteria"/>
</dbReference>
<dbReference type="HOGENOM" id="CLU_034180_11_0_6"/>
<dbReference type="BioCyc" id="ECOL199310:C0678-MONOMER"/>
<dbReference type="Proteomes" id="UP000001410">
    <property type="component" value="Chromosome"/>
</dbReference>
<dbReference type="GO" id="GO:0005886">
    <property type="term" value="C:plasma membrane"/>
    <property type="evidence" value="ECO:0007669"/>
    <property type="project" value="UniProtKB-SubCell"/>
</dbReference>
<dbReference type="GO" id="GO:0042931">
    <property type="term" value="F:enterobactin transmembrane transporter activity"/>
    <property type="evidence" value="ECO:0007669"/>
    <property type="project" value="InterPro"/>
</dbReference>
<dbReference type="CDD" id="cd06173">
    <property type="entry name" value="MFS_MefA_like"/>
    <property type="match status" value="1"/>
</dbReference>
<dbReference type="FunFam" id="1.20.1250.20:FF:000056">
    <property type="entry name" value="Enterobactin exporter EntS"/>
    <property type="match status" value="1"/>
</dbReference>
<dbReference type="Gene3D" id="1.20.1250.20">
    <property type="entry name" value="MFS general substrate transporter like domains"/>
    <property type="match status" value="1"/>
</dbReference>
<dbReference type="HAMAP" id="MF_01436">
    <property type="entry name" value="MFS_EntS"/>
    <property type="match status" value="1"/>
</dbReference>
<dbReference type="InterPro" id="IPR023722">
    <property type="entry name" value="Enterobactin_exp_EntS"/>
</dbReference>
<dbReference type="InterPro" id="IPR020846">
    <property type="entry name" value="MFS_dom"/>
</dbReference>
<dbReference type="InterPro" id="IPR036259">
    <property type="entry name" value="MFS_trans_sf"/>
</dbReference>
<dbReference type="InterPro" id="IPR010290">
    <property type="entry name" value="TM_effector"/>
</dbReference>
<dbReference type="NCBIfam" id="NF007792">
    <property type="entry name" value="PRK10489.1"/>
    <property type="match status" value="1"/>
</dbReference>
<dbReference type="PANTHER" id="PTHR23513:SF9">
    <property type="entry name" value="ENTEROBACTIN EXPORTER ENTS"/>
    <property type="match status" value="1"/>
</dbReference>
<dbReference type="PANTHER" id="PTHR23513">
    <property type="entry name" value="INTEGRAL MEMBRANE EFFLUX PROTEIN-RELATED"/>
    <property type="match status" value="1"/>
</dbReference>
<dbReference type="Pfam" id="PF05977">
    <property type="entry name" value="MFS_3"/>
    <property type="match status" value="1"/>
</dbReference>
<dbReference type="SUPFAM" id="SSF103473">
    <property type="entry name" value="MFS general substrate transporter"/>
    <property type="match status" value="1"/>
</dbReference>
<dbReference type="PROSITE" id="PS50850">
    <property type="entry name" value="MFS"/>
    <property type="match status" value="1"/>
</dbReference>
<reference key="1">
    <citation type="journal article" date="2002" name="Proc. Natl. Acad. Sci. U.S.A.">
        <title>Extensive mosaic structure revealed by the complete genome sequence of uropathogenic Escherichia coli.</title>
        <authorList>
            <person name="Welch R.A."/>
            <person name="Burland V."/>
            <person name="Plunkett G. III"/>
            <person name="Redford P."/>
            <person name="Roesch P."/>
            <person name="Rasko D."/>
            <person name="Buckles E.L."/>
            <person name="Liou S.-R."/>
            <person name="Boutin A."/>
            <person name="Hackett J."/>
            <person name="Stroud D."/>
            <person name="Mayhew G.F."/>
            <person name="Rose D.J."/>
            <person name="Zhou S."/>
            <person name="Schwartz D.C."/>
            <person name="Perna N.T."/>
            <person name="Mobley H.L.T."/>
            <person name="Donnenberg M.S."/>
            <person name="Blattner F.R."/>
        </authorList>
    </citation>
    <scope>NUCLEOTIDE SEQUENCE [LARGE SCALE GENOMIC DNA]</scope>
    <source>
        <strain>CFT073 / ATCC 700928 / UPEC</strain>
    </source>
</reference>
<feature type="chain" id="PRO_0000227650" description="Enterobactin exporter EntS">
    <location>
        <begin position="1"/>
        <end position="416"/>
    </location>
</feature>
<feature type="topological domain" description="Cytoplasmic" evidence="1">
    <location>
        <begin position="1"/>
        <end position="21"/>
    </location>
</feature>
<feature type="transmembrane region" description="Helical" evidence="1">
    <location>
        <begin position="22"/>
        <end position="42"/>
    </location>
</feature>
<feature type="topological domain" description="Periplasmic" evidence="1">
    <location>
        <begin position="43"/>
        <end position="55"/>
    </location>
</feature>
<feature type="transmembrane region" description="Helical" evidence="1">
    <location>
        <begin position="56"/>
        <end position="76"/>
    </location>
</feature>
<feature type="topological domain" description="Cytoplasmic" evidence="1">
    <location>
        <begin position="77"/>
        <end position="83"/>
    </location>
</feature>
<feature type="transmembrane region" description="Helical" evidence="1">
    <location>
        <begin position="84"/>
        <end position="104"/>
    </location>
</feature>
<feature type="topological domain" description="Periplasmic" evidence="1">
    <location>
        <begin position="105"/>
        <end position="109"/>
    </location>
</feature>
<feature type="transmembrane region" description="Helical" evidence="1">
    <location>
        <begin position="110"/>
        <end position="130"/>
    </location>
</feature>
<feature type="topological domain" description="Cytoplasmic" evidence="1">
    <location>
        <begin position="131"/>
        <end position="156"/>
    </location>
</feature>
<feature type="transmembrane region" description="Helical" evidence="1">
    <location>
        <begin position="157"/>
        <end position="177"/>
    </location>
</feature>
<feature type="topological domain" description="Periplasmic" evidence="1">
    <location>
        <position position="178"/>
    </location>
</feature>
<feature type="transmembrane region" description="Helical" evidence="1">
    <location>
        <begin position="179"/>
        <end position="199"/>
    </location>
</feature>
<feature type="topological domain" description="Cytoplasmic" evidence="1">
    <location>
        <begin position="200"/>
        <end position="218"/>
    </location>
</feature>
<feature type="transmembrane region" description="Helical" evidence="1">
    <location>
        <begin position="219"/>
        <end position="239"/>
    </location>
</feature>
<feature type="topological domain" description="Periplasmic" evidence="1">
    <location>
        <begin position="240"/>
        <end position="256"/>
    </location>
</feature>
<feature type="transmembrane region" description="Helical" evidence="1">
    <location>
        <begin position="257"/>
        <end position="277"/>
    </location>
</feature>
<feature type="topological domain" description="Cytoplasmic" evidence="1">
    <location>
        <begin position="278"/>
        <end position="287"/>
    </location>
</feature>
<feature type="transmembrane region" description="Helical" evidence="1">
    <location>
        <begin position="288"/>
        <end position="307"/>
    </location>
</feature>
<feature type="topological domain" description="Periplasmic" evidence="1">
    <location>
        <begin position="308"/>
        <end position="313"/>
    </location>
</feature>
<feature type="transmembrane region" description="Helical" evidence="1">
    <location>
        <begin position="314"/>
        <end position="336"/>
    </location>
</feature>
<feature type="topological domain" description="Cytoplasmic" evidence="1">
    <location>
        <begin position="337"/>
        <end position="356"/>
    </location>
</feature>
<feature type="transmembrane region" description="Helical" evidence="1">
    <location>
        <begin position="357"/>
        <end position="377"/>
    </location>
</feature>
<feature type="topological domain" description="Periplasmic" evidence="1">
    <location>
        <position position="378"/>
    </location>
</feature>
<feature type="transmembrane region" description="Helical" evidence="1">
    <location>
        <begin position="379"/>
        <end position="399"/>
    </location>
</feature>
<feature type="topological domain" description="Cytoplasmic" evidence="1">
    <location>
        <begin position="400"/>
        <end position="416"/>
    </location>
</feature>
<proteinExistence type="inferred from homology"/>
<evidence type="ECO:0000255" key="1">
    <source>
        <dbReference type="HAMAP-Rule" id="MF_01436"/>
    </source>
</evidence>
<gene>
    <name evidence="1" type="primary">entS</name>
    <name type="ordered locus">c0678</name>
</gene>
<organism>
    <name type="scientific">Escherichia coli O6:H1 (strain CFT073 / ATCC 700928 / UPEC)</name>
    <dbReference type="NCBI Taxonomy" id="199310"/>
    <lineage>
        <taxon>Bacteria</taxon>
        <taxon>Pseudomonadati</taxon>
        <taxon>Pseudomonadota</taxon>
        <taxon>Gammaproteobacteria</taxon>
        <taxon>Enterobacterales</taxon>
        <taxon>Enterobacteriaceae</taxon>
        <taxon>Escherichia</taxon>
    </lineage>
</organism>
<protein>
    <recommendedName>
        <fullName evidence="1">Enterobactin exporter EntS</fullName>
    </recommendedName>
</protein>
<comment type="function">
    <text evidence="1">Component of an export pathway for enterobactin.</text>
</comment>
<comment type="subcellular location">
    <subcellularLocation>
        <location evidence="1">Cell inner membrane</location>
        <topology evidence="1">Multi-pass membrane protein</topology>
    </subcellularLocation>
</comment>
<comment type="similarity">
    <text evidence="1">Belongs to the major facilitator superfamily. EntS (TC 2.A.1.38) family.</text>
</comment>
<accession>Q8FK20</accession>
<keyword id="KW-0997">Cell inner membrane</keyword>
<keyword id="KW-1003">Cell membrane</keyword>
<keyword id="KW-0472">Membrane</keyword>
<keyword id="KW-1185">Reference proteome</keyword>
<keyword id="KW-0812">Transmembrane</keyword>
<keyword id="KW-1133">Transmembrane helix</keyword>
<keyword id="KW-0813">Transport</keyword>
<sequence length="416" mass="43313">MNKQSWLLNLSLLKTHPAFRAVFLARFISIVSLGLLGVAVPVQIQMMTHSTWQVGLSVTLTGGAMFVGLMVGGVLADRYERKKVILLARGTCGIGFIGLCLNALLPEPSLLAIYLLGLWDGFFASLGVTALLAATPALVGRENLMQAGAITMLTVRLGSVISPMIGGLLLATGGVAWNYGLAAAGTFITLLPLLSLPALPPPPQPREHPLKSLLAGFRFLLASPLVGGIALLGGLLTMASAVRVLYPALADNWQMSAAQIGFLYAAIPLGAAIGALTSGKLAHSVRPGLLMLLSTLGAFLAIGLFGLMPMWILGVVCLALFGWLSAVSSLLQYTMLQTQTPEAMLGRINGLWTAQNVTGDAIGAALLGGLGAMMTPVASASASGFGLLIIGVLLLLVLVELRRFRQTPPQVTASDS</sequence>